<comment type="function">
    <text evidence="1">With CysN forms the ATP sulfurylase (ATPS) that catalyzes the adenylation of sulfate producing adenosine 5'-phosphosulfate (APS) and diphosphate, the first enzymatic step in sulfur assimilation pathway. APS synthesis involves the formation of a high-energy phosphoric-sulfuric acid anhydride bond driven by GTP hydrolysis by CysN coupled to ATP hydrolysis by CysD.</text>
</comment>
<comment type="catalytic activity">
    <reaction evidence="1">
        <text>sulfate + ATP + H(+) = adenosine 5'-phosphosulfate + diphosphate</text>
        <dbReference type="Rhea" id="RHEA:18133"/>
        <dbReference type="ChEBI" id="CHEBI:15378"/>
        <dbReference type="ChEBI" id="CHEBI:16189"/>
        <dbReference type="ChEBI" id="CHEBI:30616"/>
        <dbReference type="ChEBI" id="CHEBI:33019"/>
        <dbReference type="ChEBI" id="CHEBI:58243"/>
        <dbReference type="EC" id="2.7.7.4"/>
    </reaction>
</comment>
<comment type="pathway">
    <text evidence="1">Sulfur metabolism; hydrogen sulfide biosynthesis; sulfite from sulfate: step 1/3.</text>
</comment>
<comment type="subunit">
    <text evidence="1">Heterodimer composed of CysD, the smaller subunit, and CysN.</text>
</comment>
<comment type="similarity">
    <text evidence="1">Belongs to the PAPS reductase family. CysD subfamily.</text>
</comment>
<organism>
    <name type="scientific">Shigella sonnei (strain Ss046)</name>
    <dbReference type="NCBI Taxonomy" id="300269"/>
    <lineage>
        <taxon>Bacteria</taxon>
        <taxon>Pseudomonadati</taxon>
        <taxon>Pseudomonadota</taxon>
        <taxon>Gammaproteobacteria</taxon>
        <taxon>Enterobacterales</taxon>
        <taxon>Enterobacteriaceae</taxon>
        <taxon>Shigella</taxon>
    </lineage>
</organism>
<evidence type="ECO:0000255" key="1">
    <source>
        <dbReference type="HAMAP-Rule" id="MF_00064"/>
    </source>
</evidence>
<proteinExistence type="inferred from homology"/>
<keyword id="KW-0067">ATP-binding</keyword>
<keyword id="KW-0547">Nucleotide-binding</keyword>
<keyword id="KW-0548">Nucleotidyltransferase</keyword>
<keyword id="KW-1185">Reference proteome</keyword>
<keyword id="KW-0808">Transferase</keyword>
<feature type="chain" id="PRO_1000008996" description="Sulfate adenylyltransferase subunit 2">
    <location>
        <begin position="1"/>
        <end position="302"/>
    </location>
</feature>
<reference key="1">
    <citation type="journal article" date="2005" name="Nucleic Acids Res.">
        <title>Genome dynamics and diversity of Shigella species, the etiologic agents of bacillary dysentery.</title>
        <authorList>
            <person name="Yang F."/>
            <person name="Yang J."/>
            <person name="Zhang X."/>
            <person name="Chen L."/>
            <person name="Jiang Y."/>
            <person name="Yan Y."/>
            <person name="Tang X."/>
            <person name="Wang J."/>
            <person name="Xiong Z."/>
            <person name="Dong J."/>
            <person name="Xue Y."/>
            <person name="Zhu Y."/>
            <person name="Xu X."/>
            <person name="Sun L."/>
            <person name="Chen S."/>
            <person name="Nie H."/>
            <person name="Peng J."/>
            <person name="Xu J."/>
            <person name="Wang Y."/>
            <person name="Yuan Z."/>
            <person name="Wen Y."/>
            <person name="Yao Z."/>
            <person name="Shen Y."/>
            <person name="Qiang B."/>
            <person name="Hou Y."/>
            <person name="Yu J."/>
            <person name="Jin Q."/>
        </authorList>
    </citation>
    <scope>NUCLEOTIDE SEQUENCE [LARGE SCALE GENOMIC DNA]</scope>
    <source>
        <strain>Ss046</strain>
    </source>
</reference>
<accession>Q3YYB0</accession>
<sequence>MDQIRLTHLRQLEAESIHIIREVAAEFSNPVMLYSIGKDSSVMLHLARKAFYPGTLPFPLLHVDTGWKFREMYEFRDRTAKAYGCELLVHKNPEGVAMGINPFVHGSAKHTDIMKTEGLKQALNKYGFDAAFGGARRDEEKSRAKERIYSFRDRFHRWDPKNQRPELWHNYNGQINKGESIRVFPLSNWTEQDIWQYIWLENIDIVPLYLAAERPVLERDGMLMMIDDNRIDLQPGEVIKKRMVRFRTLGCWPLTGAVESNAQTLPEIIEEMLVSTTSERQGRVIDRDQAGSMELKKRQGYF</sequence>
<dbReference type="EC" id="2.7.7.4" evidence="1"/>
<dbReference type="EMBL" id="CP000038">
    <property type="protein sequence ID" value="AAZ89502.1"/>
    <property type="molecule type" value="Genomic_DNA"/>
</dbReference>
<dbReference type="RefSeq" id="WP_000372108.1">
    <property type="nucleotide sequence ID" value="NC_007384.1"/>
</dbReference>
<dbReference type="SMR" id="Q3YYB0"/>
<dbReference type="GeneID" id="93779254"/>
<dbReference type="KEGG" id="ssn:SSON_2900"/>
<dbReference type="HOGENOM" id="CLU_043026_0_0_6"/>
<dbReference type="UniPathway" id="UPA00140">
    <property type="reaction ID" value="UER00204"/>
</dbReference>
<dbReference type="Proteomes" id="UP000002529">
    <property type="component" value="Chromosome"/>
</dbReference>
<dbReference type="GO" id="GO:0005524">
    <property type="term" value="F:ATP binding"/>
    <property type="evidence" value="ECO:0007669"/>
    <property type="project" value="UniProtKB-KW"/>
</dbReference>
<dbReference type="GO" id="GO:0004781">
    <property type="term" value="F:sulfate adenylyltransferase (ATP) activity"/>
    <property type="evidence" value="ECO:0007669"/>
    <property type="project" value="UniProtKB-UniRule"/>
</dbReference>
<dbReference type="GO" id="GO:0070814">
    <property type="term" value="P:hydrogen sulfide biosynthetic process"/>
    <property type="evidence" value="ECO:0007669"/>
    <property type="project" value="UniProtKB-UniRule"/>
</dbReference>
<dbReference type="GO" id="GO:0000103">
    <property type="term" value="P:sulfate assimilation"/>
    <property type="evidence" value="ECO:0007669"/>
    <property type="project" value="UniProtKB-UniRule"/>
</dbReference>
<dbReference type="CDD" id="cd23946">
    <property type="entry name" value="Sulfate_adenylyltransferase_2"/>
    <property type="match status" value="1"/>
</dbReference>
<dbReference type="FunFam" id="3.40.50.620:FF:000002">
    <property type="entry name" value="Sulfate adenylyltransferase subunit 2"/>
    <property type="match status" value="1"/>
</dbReference>
<dbReference type="Gene3D" id="3.40.50.620">
    <property type="entry name" value="HUPs"/>
    <property type="match status" value="1"/>
</dbReference>
<dbReference type="HAMAP" id="MF_00064">
    <property type="entry name" value="Sulf_adenylyltr_sub2"/>
    <property type="match status" value="1"/>
</dbReference>
<dbReference type="InterPro" id="IPR002500">
    <property type="entry name" value="PAPS_reduct_dom"/>
</dbReference>
<dbReference type="InterPro" id="IPR014729">
    <property type="entry name" value="Rossmann-like_a/b/a_fold"/>
</dbReference>
<dbReference type="InterPro" id="IPR011784">
    <property type="entry name" value="SO4_adenylTrfase_ssu"/>
</dbReference>
<dbReference type="InterPro" id="IPR050128">
    <property type="entry name" value="Sulfate_adenylyltrnsfr_sub2"/>
</dbReference>
<dbReference type="NCBIfam" id="TIGR02039">
    <property type="entry name" value="CysD"/>
    <property type="match status" value="1"/>
</dbReference>
<dbReference type="NCBIfam" id="NF003587">
    <property type="entry name" value="PRK05253.1"/>
    <property type="match status" value="1"/>
</dbReference>
<dbReference type="NCBIfam" id="NF009214">
    <property type="entry name" value="PRK12563.1"/>
    <property type="match status" value="1"/>
</dbReference>
<dbReference type="PANTHER" id="PTHR43196">
    <property type="entry name" value="SULFATE ADENYLYLTRANSFERASE SUBUNIT 2"/>
    <property type="match status" value="1"/>
</dbReference>
<dbReference type="PANTHER" id="PTHR43196:SF1">
    <property type="entry name" value="SULFATE ADENYLYLTRANSFERASE SUBUNIT 2"/>
    <property type="match status" value="1"/>
</dbReference>
<dbReference type="Pfam" id="PF01507">
    <property type="entry name" value="PAPS_reduct"/>
    <property type="match status" value="1"/>
</dbReference>
<dbReference type="PIRSF" id="PIRSF002936">
    <property type="entry name" value="CysDAde_trans"/>
    <property type="match status" value="1"/>
</dbReference>
<dbReference type="SUPFAM" id="SSF52402">
    <property type="entry name" value="Adenine nucleotide alpha hydrolases-like"/>
    <property type="match status" value="1"/>
</dbReference>
<protein>
    <recommendedName>
        <fullName evidence="1">Sulfate adenylyltransferase subunit 2</fullName>
        <ecNumber evidence="1">2.7.7.4</ecNumber>
    </recommendedName>
    <alternativeName>
        <fullName evidence="1">ATP-sulfurylase small subunit</fullName>
    </alternativeName>
    <alternativeName>
        <fullName evidence="1">Sulfate adenylate transferase</fullName>
        <shortName evidence="1">SAT</shortName>
    </alternativeName>
</protein>
<gene>
    <name evidence="1" type="primary">cysD</name>
    <name type="ordered locus">SSON_2900</name>
</gene>
<name>CYSD_SHISS</name>